<name>RPOS_VIBCH</name>
<proteinExistence type="inferred from homology"/>
<evidence type="ECO:0000255" key="1">
    <source>
        <dbReference type="HAMAP-Rule" id="MF_00959"/>
    </source>
</evidence>
<evidence type="ECO:0000269" key="2">
    <source>
    </source>
</evidence>
<protein>
    <recommendedName>
        <fullName evidence="1">RNA polymerase sigma factor RpoS</fullName>
    </recommendedName>
    <alternativeName>
        <fullName evidence="1">Sigma S</fullName>
    </alternativeName>
    <alternativeName>
        <fullName evidence="1">Sigma-38</fullName>
    </alternativeName>
</protein>
<organism>
    <name type="scientific">Vibrio cholerae serotype O1 (strain ATCC 39315 / El Tor Inaba N16961)</name>
    <dbReference type="NCBI Taxonomy" id="243277"/>
    <lineage>
        <taxon>Bacteria</taxon>
        <taxon>Pseudomonadati</taxon>
        <taxon>Pseudomonadota</taxon>
        <taxon>Gammaproteobacteria</taxon>
        <taxon>Vibrionales</taxon>
        <taxon>Vibrionaceae</taxon>
        <taxon>Vibrio</taxon>
    </lineage>
</organism>
<comment type="function">
    <text evidence="1 2">Sigma factors are initiation factors that promote the attachment of RNA polymerase to specific initiation sites and are then released. This sigma factor is the master transcriptional regulator of the stationary phase and the general stress response (By similarity). May be required for the persistence of V.cholerae in aquatic habitats.</text>
</comment>
<comment type="subunit">
    <text evidence="1">Interacts with the RNA polymerase core enzyme.</text>
</comment>
<comment type="subcellular location">
    <subcellularLocation>
        <location evidence="1">Cytoplasm</location>
    </subcellularLocation>
</comment>
<comment type="similarity">
    <text evidence="1">Belongs to the sigma-70 factor family. RpoS subfamily.</text>
</comment>
<accession>O51804</accession>
<accession>Q9JQ13</accession>
<reference key="1">
    <citation type="journal article" date="1998" name="J. Bacteriol.">
        <title>Role of rpoS in stress survival and virulence of Vibrio cholerae.</title>
        <authorList>
            <person name="Yildiz F.H."/>
            <person name="Schoolnik G.K."/>
        </authorList>
    </citation>
    <scope>NUCLEOTIDE SEQUENCE [GENOMIC DNA]</scope>
    <scope>FUNCTION</scope>
    <source>
        <strain>El Tor Inaba 92A1552</strain>
    </source>
</reference>
<reference key="2">
    <citation type="journal article" date="2000" name="Nature">
        <title>DNA sequence of both chromosomes of the cholera pathogen Vibrio cholerae.</title>
        <authorList>
            <person name="Heidelberg J.F."/>
            <person name="Eisen J.A."/>
            <person name="Nelson W.C."/>
            <person name="Clayton R.A."/>
            <person name="Gwinn M.L."/>
            <person name="Dodson R.J."/>
            <person name="Haft D.H."/>
            <person name="Hickey E.K."/>
            <person name="Peterson J.D."/>
            <person name="Umayam L.A."/>
            <person name="Gill S.R."/>
            <person name="Nelson K.E."/>
            <person name="Read T.D."/>
            <person name="Tettelin H."/>
            <person name="Richardson D.L."/>
            <person name="Ermolaeva M.D."/>
            <person name="Vamathevan J.J."/>
            <person name="Bass S."/>
            <person name="Qin H."/>
            <person name="Dragoi I."/>
            <person name="Sellers P."/>
            <person name="McDonald L.A."/>
            <person name="Utterback T.R."/>
            <person name="Fleischmann R.D."/>
            <person name="Nierman W.C."/>
            <person name="White O."/>
            <person name="Salzberg S.L."/>
            <person name="Smith H.O."/>
            <person name="Colwell R.R."/>
            <person name="Mekalanos J.J."/>
            <person name="Venter J.C."/>
            <person name="Fraser C.M."/>
        </authorList>
    </citation>
    <scope>NUCLEOTIDE SEQUENCE [LARGE SCALE GENOMIC DNA]</scope>
    <source>
        <strain>ATCC 39315 / El Tor Inaba N16961</strain>
    </source>
</reference>
<feature type="chain" id="PRO_0000093976" description="RNA polymerase sigma factor RpoS">
    <location>
        <begin position="1"/>
        <end position="335"/>
    </location>
</feature>
<feature type="DNA-binding region" description="H-T-H motif" evidence="1">
    <location>
        <begin position="289"/>
        <end position="308"/>
    </location>
</feature>
<feature type="region of interest" description="Sigma-70 factor domain-1" evidence="1">
    <location>
        <begin position="57"/>
        <end position="90"/>
    </location>
</feature>
<feature type="region of interest" description="Sigma-70 factor domain-2" evidence="1">
    <location>
        <begin position="95"/>
        <end position="165"/>
    </location>
</feature>
<feature type="region of interest" description="Sigma-70 factor domain-3" evidence="1">
    <location>
        <begin position="175"/>
        <end position="250"/>
    </location>
</feature>
<feature type="region of interest" description="Sigma-70 factor domain-4" evidence="1">
    <location>
        <begin position="263"/>
        <end position="316"/>
    </location>
</feature>
<feature type="short sequence motif" description="Interaction with polymerase core subunit RpoC">
    <location>
        <begin position="119"/>
        <end position="122"/>
    </location>
</feature>
<keyword id="KW-0963">Cytoplasm</keyword>
<keyword id="KW-0238">DNA-binding</keyword>
<keyword id="KW-1185">Reference proteome</keyword>
<keyword id="KW-0731">Sigma factor</keyword>
<keyword id="KW-0804">Transcription</keyword>
<keyword id="KW-0805">Transcription regulation</keyword>
<sequence>MSVSNTVTKVEEFDFEDEALEVLETDAELTSDEELVAVEGASEDVREEFDASAKSLDATQMYLSEIGFSPLLTAEEEVLYARRALRGDEAARKRMIESNLRLVVKISRRYSNRGLALLDLIEEGNLGLIRAVEKFDPERGFRFSTYATWWIRQTIERALMNQTRTIRLPIHVVKELNIYLRTARELSQRLDHEPTPEEIALELDRPVDDVTKMLRLNERISSVDTPIGGDGDKALLDILPDSHNADPEFSTQDDDIRESLLNWLDELNPKQKEVLARRFGLLGYEPSTLEEVGREINLTRERVRQIQVEGLRRLREILVKQGLNMEALFNVEYDN</sequence>
<gene>
    <name evidence="1" type="primary">rpoS</name>
    <name type="ordered locus">VC_0534</name>
</gene>
<dbReference type="EMBL" id="AF000945">
    <property type="protein sequence ID" value="AAC38175.1"/>
    <property type="molecule type" value="Genomic_DNA"/>
</dbReference>
<dbReference type="EMBL" id="AE003852">
    <property type="protein sequence ID" value="AAF93702.1"/>
    <property type="molecule type" value="Genomic_DNA"/>
</dbReference>
<dbReference type="PIR" id="A82312">
    <property type="entry name" value="A82312"/>
</dbReference>
<dbReference type="RefSeq" id="NP_230185.1">
    <property type="nucleotide sequence ID" value="NC_002505.1"/>
</dbReference>
<dbReference type="RefSeq" id="WP_000116737.1">
    <property type="nucleotide sequence ID" value="NZ_LT906614.1"/>
</dbReference>
<dbReference type="SMR" id="O51804"/>
<dbReference type="STRING" id="243277.VC_0534"/>
<dbReference type="DNASU" id="2615203"/>
<dbReference type="EnsemblBacteria" id="AAF93702">
    <property type="protein sequence ID" value="AAF93702"/>
    <property type="gene ID" value="VC_0534"/>
</dbReference>
<dbReference type="KEGG" id="vch:VC_0534"/>
<dbReference type="PATRIC" id="fig|243277.26.peg.510"/>
<dbReference type="eggNOG" id="COG0568">
    <property type="taxonomic scope" value="Bacteria"/>
</dbReference>
<dbReference type="HOGENOM" id="CLU_014793_3_5_6"/>
<dbReference type="PHI-base" id="PHI:9841"/>
<dbReference type="Proteomes" id="UP000000584">
    <property type="component" value="Chromosome 1"/>
</dbReference>
<dbReference type="GO" id="GO:0005737">
    <property type="term" value="C:cytoplasm"/>
    <property type="evidence" value="ECO:0007669"/>
    <property type="project" value="UniProtKB-SubCell"/>
</dbReference>
<dbReference type="GO" id="GO:0003677">
    <property type="term" value="F:DNA binding"/>
    <property type="evidence" value="ECO:0007669"/>
    <property type="project" value="UniProtKB-UniRule"/>
</dbReference>
<dbReference type="GO" id="GO:0016987">
    <property type="term" value="F:sigma factor activity"/>
    <property type="evidence" value="ECO:0007669"/>
    <property type="project" value="UniProtKB-UniRule"/>
</dbReference>
<dbReference type="GO" id="GO:0006352">
    <property type="term" value="P:DNA-templated transcription initiation"/>
    <property type="evidence" value="ECO:0007669"/>
    <property type="project" value="UniProtKB-UniRule"/>
</dbReference>
<dbReference type="CDD" id="cd06171">
    <property type="entry name" value="Sigma70_r4"/>
    <property type="match status" value="1"/>
</dbReference>
<dbReference type="FunFam" id="1.10.10.10:FF:000044">
    <property type="entry name" value="RNA polymerase sigma factor RpoS"/>
    <property type="match status" value="1"/>
</dbReference>
<dbReference type="FunFam" id="1.10.601.10:FF:000001">
    <property type="entry name" value="RNA polymerase sigma factor SigA"/>
    <property type="match status" value="1"/>
</dbReference>
<dbReference type="Gene3D" id="1.10.601.10">
    <property type="entry name" value="RNA Polymerase Primary Sigma Factor"/>
    <property type="match status" value="1"/>
</dbReference>
<dbReference type="Gene3D" id="1.10.10.10">
    <property type="entry name" value="Winged helix-like DNA-binding domain superfamily/Winged helix DNA-binding domain"/>
    <property type="match status" value="2"/>
</dbReference>
<dbReference type="HAMAP" id="MF_00959">
    <property type="entry name" value="Sigma70_RpoS"/>
    <property type="match status" value="1"/>
</dbReference>
<dbReference type="InterPro" id="IPR014284">
    <property type="entry name" value="RNA_pol_sigma-70_dom"/>
</dbReference>
<dbReference type="InterPro" id="IPR000943">
    <property type="entry name" value="RNA_pol_sigma70"/>
</dbReference>
<dbReference type="InterPro" id="IPR009042">
    <property type="entry name" value="RNA_pol_sigma70_r1_2"/>
</dbReference>
<dbReference type="InterPro" id="IPR007627">
    <property type="entry name" value="RNA_pol_sigma70_r2"/>
</dbReference>
<dbReference type="InterPro" id="IPR007624">
    <property type="entry name" value="RNA_pol_sigma70_r3"/>
</dbReference>
<dbReference type="InterPro" id="IPR007630">
    <property type="entry name" value="RNA_pol_sigma70_r4"/>
</dbReference>
<dbReference type="InterPro" id="IPR013325">
    <property type="entry name" value="RNA_pol_sigma_r2"/>
</dbReference>
<dbReference type="InterPro" id="IPR013324">
    <property type="entry name" value="RNA_pol_sigma_r3/r4-like"/>
</dbReference>
<dbReference type="InterPro" id="IPR012761">
    <property type="entry name" value="RNA_pol_sigma_RpoS"/>
</dbReference>
<dbReference type="InterPro" id="IPR050239">
    <property type="entry name" value="Sigma-70_RNA_pol_init_factors"/>
</dbReference>
<dbReference type="InterPro" id="IPR036388">
    <property type="entry name" value="WH-like_DNA-bd_sf"/>
</dbReference>
<dbReference type="NCBIfam" id="NF004207">
    <property type="entry name" value="PRK05657.1"/>
    <property type="match status" value="1"/>
</dbReference>
<dbReference type="NCBIfam" id="TIGR02394">
    <property type="entry name" value="rpoS_proteo"/>
    <property type="match status" value="1"/>
</dbReference>
<dbReference type="NCBIfam" id="TIGR02937">
    <property type="entry name" value="sigma70-ECF"/>
    <property type="match status" value="1"/>
</dbReference>
<dbReference type="PANTHER" id="PTHR30603">
    <property type="entry name" value="RNA POLYMERASE SIGMA FACTOR RPO"/>
    <property type="match status" value="1"/>
</dbReference>
<dbReference type="PANTHER" id="PTHR30603:SF67">
    <property type="entry name" value="RNA POLYMERASE SIGMA FACTOR RPOS"/>
    <property type="match status" value="1"/>
</dbReference>
<dbReference type="Pfam" id="PF00140">
    <property type="entry name" value="Sigma70_r1_2"/>
    <property type="match status" value="1"/>
</dbReference>
<dbReference type="Pfam" id="PF04542">
    <property type="entry name" value="Sigma70_r2"/>
    <property type="match status" value="1"/>
</dbReference>
<dbReference type="Pfam" id="PF04539">
    <property type="entry name" value="Sigma70_r3"/>
    <property type="match status" value="1"/>
</dbReference>
<dbReference type="Pfam" id="PF04545">
    <property type="entry name" value="Sigma70_r4"/>
    <property type="match status" value="1"/>
</dbReference>
<dbReference type="PRINTS" id="PR00046">
    <property type="entry name" value="SIGMA70FCT"/>
</dbReference>
<dbReference type="SUPFAM" id="SSF88946">
    <property type="entry name" value="Sigma2 domain of RNA polymerase sigma factors"/>
    <property type="match status" value="1"/>
</dbReference>
<dbReference type="SUPFAM" id="SSF88659">
    <property type="entry name" value="Sigma3 and sigma4 domains of RNA polymerase sigma factors"/>
    <property type="match status" value="2"/>
</dbReference>
<dbReference type="PROSITE" id="PS00715">
    <property type="entry name" value="SIGMA70_1"/>
    <property type="match status" value="1"/>
</dbReference>
<dbReference type="PROSITE" id="PS00716">
    <property type="entry name" value="SIGMA70_2"/>
    <property type="match status" value="1"/>
</dbReference>